<name>RL1_SACEN</name>
<proteinExistence type="inferred from homology"/>
<accession>A4FPQ9</accession>
<protein>
    <recommendedName>
        <fullName evidence="1">Large ribosomal subunit protein uL1</fullName>
    </recommendedName>
    <alternativeName>
        <fullName evidence="2">50S ribosomal protein L1</fullName>
    </alternativeName>
</protein>
<gene>
    <name evidence="1" type="primary">rplA</name>
    <name type="ordered locus">SACE_6870</name>
</gene>
<reference key="1">
    <citation type="journal article" date="2007" name="Nat. Biotechnol.">
        <title>Complete genome sequence of the erythromycin-producing bacterium Saccharopolyspora erythraea NRRL23338.</title>
        <authorList>
            <person name="Oliynyk M."/>
            <person name="Samborskyy M."/>
            <person name="Lester J.B."/>
            <person name="Mironenko T."/>
            <person name="Scott N."/>
            <person name="Dickens S."/>
            <person name="Haydock S.F."/>
            <person name="Leadlay P.F."/>
        </authorList>
    </citation>
    <scope>NUCLEOTIDE SEQUENCE [LARGE SCALE GENOMIC DNA]</scope>
    <source>
        <strain>ATCC 11635 / DSM 40517 / JCM 4748 / NBRC 13426 / NCIMB 8594 / NRRL 2338</strain>
    </source>
</reference>
<sequence length="238" mass="25454">MAKRSKAYQQAAELVDRARLYAPLEAAELAKKTAKVKMDPTVEVAMRLGVDPRKADQMVRGTVNLPHGTGKTARVIVFAVGDKAAEAEAAGADAVGSEDLIERIQGGWLDFDAAIATPDQMAKVGKIARVLGPRGLMPNPKTGTVTPNVTKAVADIKGGKINFRVDKQANLHIVIGKASFDTDKLVENYAAALDEILRAKPSTSKGRYLKKVTFTTTMGPGIPVDPNRTRNLLEPAQV</sequence>
<feature type="chain" id="PRO_0000308096" description="Large ribosomal subunit protein uL1">
    <location>
        <begin position="1"/>
        <end position="238"/>
    </location>
</feature>
<keyword id="KW-1185">Reference proteome</keyword>
<keyword id="KW-0678">Repressor</keyword>
<keyword id="KW-0687">Ribonucleoprotein</keyword>
<keyword id="KW-0689">Ribosomal protein</keyword>
<keyword id="KW-0694">RNA-binding</keyword>
<keyword id="KW-0699">rRNA-binding</keyword>
<keyword id="KW-0810">Translation regulation</keyword>
<keyword id="KW-0820">tRNA-binding</keyword>
<dbReference type="EMBL" id="AM420293">
    <property type="protein sequence ID" value="CAM06034.1"/>
    <property type="molecule type" value="Genomic_DNA"/>
</dbReference>
<dbReference type="RefSeq" id="WP_009944087.1">
    <property type="nucleotide sequence ID" value="NC_009142.1"/>
</dbReference>
<dbReference type="SMR" id="A4FPQ9"/>
<dbReference type="STRING" id="405948.SACE_6870"/>
<dbReference type="KEGG" id="sen:SACE_6870"/>
<dbReference type="eggNOG" id="COG0081">
    <property type="taxonomic scope" value="Bacteria"/>
</dbReference>
<dbReference type="HOGENOM" id="CLU_062853_0_0_11"/>
<dbReference type="OrthoDB" id="9803740at2"/>
<dbReference type="Proteomes" id="UP000006728">
    <property type="component" value="Chromosome"/>
</dbReference>
<dbReference type="GO" id="GO:0015934">
    <property type="term" value="C:large ribosomal subunit"/>
    <property type="evidence" value="ECO:0007669"/>
    <property type="project" value="InterPro"/>
</dbReference>
<dbReference type="GO" id="GO:0019843">
    <property type="term" value="F:rRNA binding"/>
    <property type="evidence" value="ECO:0007669"/>
    <property type="project" value="UniProtKB-UniRule"/>
</dbReference>
<dbReference type="GO" id="GO:0003735">
    <property type="term" value="F:structural constituent of ribosome"/>
    <property type="evidence" value="ECO:0007669"/>
    <property type="project" value="InterPro"/>
</dbReference>
<dbReference type="GO" id="GO:0000049">
    <property type="term" value="F:tRNA binding"/>
    <property type="evidence" value="ECO:0007669"/>
    <property type="project" value="UniProtKB-KW"/>
</dbReference>
<dbReference type="GO" id="GO:0006417">
    <property type="term" value="P:regulation of translation"/>
    <property type="evidence" value="ECO:0007669"/>
    <property type="project" value="UniProtKB-KW"/>
</dbReference>
<dbReference type="GO" id="GO:0006412">
    <property type="term" value="P:translation"/>
    <property type="evidence" value="ECO:0007669"/>
    <property type="project" value="UniProtKB-UniRule"/>
</dbReference>
<dbReference type="CDD" id="cd00403">
    <property type="entry name" value="Ribosomal_L1"/>
    <property type="match status" value="1"/>
</dbReference>
<dbReference type="FunFam" id="3.40.50.790:FF:000001">
    <property type="entry name" value="50S ribosomal protein L1"/>
    <property type="match status" value="1"/>
</dbReference>
<dbReference type="Gene3D" id="3.30.190.20">
    <property type="match status" value="1"/>
</dbReference>
<dbReference type="Gene3D" id="3.40.50.790">
    <property type="match status" value="1"/>
</dbReference>
<dbReference type="HAMAP" id="MF_01318_B">
    <property type="entry name" value="Ribosomal_uL1_B"/>
    <property type="match status" value="1"/>
</dbReference>
<dbReference type="InterPro" id="IPR005878">
    <property type="entry name" value="Ribosom_uL1_bac-type"/>
</dbReference>
<dbReference type="InterPro" id="IPR002143">
    <property type="entry name" value="Ribosomal_uL1"/>
</dbReference>
<dbReference type="InterPro" id="IPR023674">
    <property type="entry name" value="Ribosomal_uL1-like"/>
</dbReference>
<dbReference type="InterPro" id="IPR028364">
    <property type="entry name" value="Ribosomal_uL1/biogenesis"/>
</dbReference>
<dbReference type="InterPro" id="IPR016095">
    <property type="entry name" value="Ribosomal_uL1_3-a/b-sand"/>
</dbReference>
<dbReference type="InterPro" id="IPR023673">
    <property type="entry name" value="Ribosomal_uL1_CS"/>
</dbReference>
<dbReference type="NCBIfam" id="TIGR01169">
    <property type="entry name" value="rplA_bact"/>
    <property type="match status" value="1"/>
</dbReference>
<dbReference type="PANTHER" id="PTHR36427">
    <property type="entry name" value="54S RIBOSOMAL PROTEIN L1, MITOCHONDRIAL"/>
    <property type="match status" value="1"/>
</dbReference>
<dbReference type="PANTHER" id="PTHR36427:SF3">
    <property type="entry name" value="LARGE RIBOSOMAL SUBUNIT PROTEIN UL1M"/>
    <property type="match status" value="1"/>
</dbReference>
<dbReference type="Pfam" id="PF00687">
    <property type="entry name" value="Ribosomal_L1"/>
    <property type="match status" value="1"/>
</dbReference>
<dbReference type="PIRSF" id="PIRSF002155">
    <property type="entry name" value="Ribosomal_L1"/>
    <property type="match status" value="1"/>
</dbReference>
<dbReference type="SUPFAM" id="SSF56808">
    <property type="entry name" value="Ribosomal protein L1"/>
    <property type="match status" value="1"/>
</dbReference>
<dbReference type="PROSITE" id="PS01199">
    <property type="entry name" value="RIBOSOMAL_L1"/>
    <property type="match status" value="1"/>
</dbReference>
<comment type="function">
    <text evidence="1">Binds directly to 23S rRNA. The L1 stalk is quite mobile in the ribosome, and is involved in E site tRNA release.</text>
</comment>
<comment type="function">
    <text evidence="1">Protein L1 is also a translational repressor protein, it controls the translation of the L11 operon by binding to its mRNA.</text>
</comment>
<comment type="subunit">
    <text evidence="1">Part of the 50S ribosomal subunit.</text>
</comment>
<comment type="similarity">
    <text evidence="1">Belongs to the universal ribosomal protein uL1 family.</text>
</comment>
<organism>
    <name type="scientific">Saccharopolyspora erythraea (strain ATCC 11635 / DSM 40517 / JCM 4748 / NBRC 13426 / NCIMB 8594 / NRRL 2338)</name>
    <dbReference type="NCBI Taxonomy" id="405948"/>
    <lineage>
        <taxon>Bacteria</taxon>
        <taxon>Bacillati</taxon>
        <taxon>Actinomycetota</taxon>
        <taxon>Actinomycetes</taxon>
        <taxon>Pseudonocardiales</taxon>
        <taxon>Pseudonocardiaceae</taxon>
        <taxon>Saccharopolyspora</taxon>
    </lineage>
</organism>
<evidence type="ECO:0000255" key="1">
    <source>
        <dbReference type="HAMAP-Rule" id="MF_01318"/>
    </source>
</evidence>
<evidence type="ECO:0000305" key="2"/>